<comment type="function">
    <text evidence="1">Redox regulated molecular chaperone. Protects both thermally unfolding and oxidatively damaged proteins from irreversible aggregation. Plays an important role in the bacterial defense system toward oxidative stress.</text>
</comment>
<comment type="subcellular location">
    <subcellularLocation>
        <location evidence="1">Cytoplasm</location>
    </subcellularLocation>
</comment>
<comment type="PTM">
    <text evidence="1">Under oxidizing conditions two disulfide bonds are formed involving the reactive cysteines. Under reducing conditions zinc is bound to the reactive cysteines and the protein is inactive.</text>
</comment>
<comment type="similarity">
    <text evidence="1">Belongs to the HSP33 family.</text>
</comment>
<comment type="sequence caution" evidence="2">
    <conflict type="erroneous initiation">
        <sequence resource="EMBL-CDS" id="AAX67336"/>
    </conflict>
</comment>
<proteinExistence type="inferred from homology"/>
<evidence type="ECO:0000255" key="1">
    <source>
        <dbReference type="HAMAP-Rule" id="MF_00117"/>
    </source>
</evidence>
<evidence type="ECO:0000305" key="2"/>
<reference key="1">
    <citation type="journal article" date="2005" name="Nucleic Acids Res.">
        <title>The genome sequence of Salmonella enterica serovar Choleraesuis, a highly invasive and resistant zoonotic pathogen.</title>
        <authorList>
            <person name="Chiu C.-H."/>
            <person name="Tang P."/>
            <person name="Chu C."/>
            <person name="Hu S."/>
            <person name="Bao Q."/>
            <person name="Yu J."/>
            <person name="Chou Y.-Y."/>
            <person name="Wang H.-S."/>
            <person name="Lee Y.-S."/>
        </authorList>
    </citation>
    <scope>NUCLEOTIDE SEQUENCE [LARGE SCALE GENOMIC DNA]</scope>
    <source>
        <strain>SC-B67</strain>
    </source>
</reference>
<accession>Q57IX6</accession>
<organism>
    <name type="scientific">Salmonella choleraesuis (strain SC-B67)</name>
    <dbReference type="NCBI Taxonomy" id="321314"/>
    <lineage>
        <taxon>Bacteria</taxon>
        <taxon>Pseudomonadati</taxon>
        <taxon>Pseudomonadota</taxon>
        <taxon>Gammaproteobacteria</taxon>
        <taxon>Enterobacterales</taxon>
        <taxon>Enterobacteriaceae</taxon>
        <taxon>Salmonella</taxon>
    </lineage>
</organism>
<feature type="chain" id="PRO_0000238087" description="33 kDa chaperonin">
    <location>
        <begin position="1"/>
        <end position="292"/>
    </location>
</feature>
<feature type="disulfide bond" description="Redox-active" evidence="1">
    <location>
        <begin position="230"/>
        <end position="232"/>
    </location>
</feature>
<feature type="disulfide bond" description="Redox-active" evidence="1">
    <location>
        <begin position="263"/>
        <end position="266"/>
    </location>
</feature>
<gene>
    <name evidence="1" type="primary">hslO</name>
    <name type="ordered locus">SCH_3430</name>
</gene>
<name>HSLO_SALCH</name>
<dbReference type="EMBL" id="AE017220">
    <property type="protein sequence ID" value="AAX67336.1"/>
    <property type="status" value="ALT_INIT"/>
    <property type="molecule type" value="Genomic_DNA"/>
</dbReference>
<dbReference type="RefSeq" id="WP_001673738.1">
    <property type="nucleotide sequence ID" value="NC_006905.1"/>
</dbReference>
<dbReference type="SMR" id="Q57IX6"/>
<dbReference type="KEGG" id="sec:SCH_3430"/>
<dbReference type="HOGENOM" id="CLU_054493_0_0_6"/>
<dbReference type="Proteomes" id="UP000000538">
    <property type="component" value="Chromosome"/>
</dbReference>
<dbReference type="GO" id="GO:0005737">
    <property type="term" value="C:cytoplasm"/>
    <property type="evidence" value="ECO:0007669"/>
    <property type="project" value="UniProtKB-SubCell"/>
</dbReference>
<dbReference type="GO" id="GO:0044183">
    <property type="term" value="F:protein folding chaperone"/>
    <property type="evidence" value="ECO:0007669"/>
    <property type="project" value="TreeGrafter"/>
</dbReference>
<dbReference type="GO" id="GO:0051082">
    <property type="term" value="F:unfolded protein binding"/>
    <property type="evidence" value="ECO:0007669"/>
    <property type="project" value="UniProtKB-UniRule"/>
</dbReference>
<dbReference type="GO" id="GO:0042026">
    <property type="term" value="P:protein refolding"/>
    <property type="evidence" value="ECO:0007669"/>
    <property type="project" value="TreeGrafter"/>
</dbReference>
<dbReference type="CDD" id="cd00498">
    <property type="entry name" value="Hsp33"/>
    <property type="match status" value="1"/>
</dbReference>
<dbReference type="FunFam" id="3.55.30.10:FF:000001">
    <property type="entry name" value="33 kDa chaperonin"/>
    <property type="match status" value="1"/>
</dbReference>
<dbReference type="Gene3D" id="1.10.287.480">
    <property type="entry name" value="helix hairpin bin"/>
    <property type="match status" value="1"/>
</dbReference>
<dbReference type="Gene3D" id="3.55.30.10">
    <property type="entry name" value="Hsp33 domain"/>
    <property type="match status" value="1"/>
</dbReference>
<dbReference type="Gene3D" id="3.90.1280.10">
    <property type="entry name" value="HSP33 redox switch-like"/>
    <property type="match status" value="1"/>
</dbReference>
<dbReference type="HAMAP" id="MF_00117">
    <property type="entry name" value="HslO"/>
    <property type="match status" value="1"/>
</dbReference>
<dbReference type="InterPro" id="IPR000397">
    <property type="entry name" value="Heat_shock_Hsp33"/>
</dbReference>
<dbReference type="InterPro" id="IPR016154">
    <property type="entry name" value="Heat_shock_Hsp33_C"/>
</dbReference>
<dbReference type="InterPro" id="IPR016153">
    <property type="entry name" value="Heat_shock_Hsp33_N"/>
</dbReference>
<dbReference type="InterPro" id="IPR023212">
    <property type="entry name" value="Hsp33_helix_hairpin_bin_dom_sf"/>
</dbReference>
<dbReference type="NCBIfam" id="NF001033">
    <property type="entry name" value="PRK00114.1"/>
    <property type="match status" value="1"/>
</dbReference>
<dbReference type="PANTHER" id="PTHR30111">
    <property type="entry name" value="33 KDA CHAPERONIN"/>
    <property type="match status" value="1"/>
</dbReference>
<dbReference type="PANTHER" id="PTHR30111:SF1">
    <property type="entry name" value="33 KDA CHAPERONIN"/>
    <property type="match status" value="1"/>
</dbReference>
<dbReference type="Pfam" id="PF01430">
    <property type="entry name" value="HSP33"/>
    <property type="match status" value="1"/>
</dbReference>
<dbReference type="PIRSF" id="PIRSF005261">
    <property type="entry name" value="Heat_shock_Hsp33"/>
    <property type="match status" value="1"/>
</dbReference>
<dbReference type="SUPFAM" id="SSF64397">
    <property type="entry name" value="Hsp33 domain"/>
    <property type="match status" value="1"/>
</dbReference>
<dbReference type="SUPFAM" id="SSF118352">
    <property type="entry name" value="HSP33 redox switch-like"/>
    <property type="match status" value="1"/>
</dbReference>
<keyword id="KW-0143">Chaperone</keyword>
<keyword id="KW-0963">Cytoplasm</keyword>
<keyword id="KW-1015">Disulfide bond</keyword>
<keyword id="KW-0676">Redox-active center</keyword>
<keyword id="KW-0862">Zinc</keyword>
<sequence length="292" mass="32356">MPQHDQLHRYLFENFAVRGELVTVSETLQQILDNHTYPQPVKTVLAELLVATSLLTATLKFAGDITVQLQGDGPLSLAVINGNNQQQMRGVARVQGDIPDNADLKTLVGNGYLVITITPEEGERYQGVVGLEGDTLAACLEDYFLRSEQLPTRLFIRTGDVDGKPAAGGMLLQVMPAQNAQAEDFDHLAMLTETIKSEELLTLPANDVLWRLYHEEEVTLYDPQNVEFKCTCSRERCAGALKTLPDEEVDSILAEEGEIDMHCDYCGNHYLFNAMDIAEIRNNASPADPQVH</sequence>
<protein>
    <recommendedName>
        <fullName evidence="1">33 kDa chaperonin</fullName>
    </recommendedName>
    <alternativeName>
        <fullName evidence="1">Heat shock protein 33 homolog</fullName>
        <shortName evidence="1">HSP33</shortName>
    </alternativeName>
</protein>